<dbReference type="EMBL" id="CP000058">
    <property type="protein sequence ID" value="AAZ34632.1"/>
    <property type="molecule type" value="Genomic_DNA"/>
</dbReference>
<dbReference type="RefSeq" id="WP_011168213.1">
    <property type="nucleotide sequence ID" value="NC_005773.3"/>
</dbReference>
<dbReference type="SMR" id="Q48KQ4"/>
<dbReference type="KEGG" id="psp:PSPPH_1787"/>
<dbReference type="eggNOG" id="COG0425">
    <property type="taxonomic scope" value="Bacteria"/>
</dbReference>
<dbReference type="HOGENOM" id="CLU_165255_5_1_6"/>
<dbReference type="Proteomes" id="UP000000551">
    <property type="component" value="Chromosome"/>
</dbReference>
<dbReference type="GO" id="GO:0005737">
    <property type="term" value="C:cytoplasm"/>
    <property type="evidence" value="ECO:0007669"/>
    <property type="project" value="UniProtKB-SubCell"/>
</dbReference>
<dbReference type="GO" id="GO:0097163">
    <property type="term" value="F:sulfur carrier activity"/>
    <property type="evidence" value="ECO:0007669"/>
    <property type="project" value="UniProtKB-UniRule"/>
</dbReference>
<dbReference type="GO" id="GO:0002143">
    <property type="term" value="P:tRNA wobble position uridine thiolation"/>
    <property type="evidence" value="ECO:0007669"/>
    <property type="project" value="InterPro"/>
</dbReference>
<dbReference type="CDD" id="cd03423">
    <property type="entry name" value="SirA"/>
    <property type="match status" value="1"/>
</dbReference>
<dbReference type="Gene3D" id="3.30.110.40">
    <property type="entry name" value="TusA-like domain"/>
    <property type="match status" value="1"/>
</dbReference>
<dbReference type="HAMAP" id="MF_00413">
    <property type="entry name" value="Thiourid_synth_A"/>
    <property type="match status" value="1"/>
</dbReference>
<dbReference type="InterPro" id="IPR022931">
    <property type="entry name" value="Sulphur_carrier_TusA"/>
</dbReference>
<dbReference type="InterPro" id="IPR001455">
    <property type="entry name" value="TusA-like"/>
</dbReference>
<dbReference type="InterPro" id="IPR036868">
    <property type="entry name" value="TusA-like_sf"/>
</dbReference>
<dbReference type="NCBIfam" id="NF001423">
    <property type="entry name" value="PRK00299.1"/>
    <property type="match status" value="1"/>
</dbReference>
<dbReference type="PANTHER" id="PTHR33279:SF2">
    <property type="entry name" value="SULFUR CARRIER PROTEIN TUSA"/>
    <property type="match status" value="1"/>
</dbReference>
<dbReference type="PANTHER" id="PTHR33279">
    <property type="entry name" value="SULFUR CARRIER PROTEIN YEDF-RELATED"/>
    <property type="match status" value="1"/>
</dbReference>
<dbReference type="Pfam" id="PF01206">
    <property type="entry name" value="TusA"/>
    <property type="match status" value="1"/>
</dbReference>
<dbReference type="SUPFAM" id="SSF64307">
    <property type="entry name" value="SirA-like"/>
    <property type="match status" value="1"/>
</dbReference>
<dbReference type="PROSITE" id="PS01148">
    <property type="entry name" value="UPF0033"/>
    <property type="match status" value="1"/>
</dbReference>
<feature type="chain" id="PRO_0000234122" description="Sulfur carrier protein TusA">
    <location>
        <begin position="1"/>
        <end position="84"/>
    </location>
</feature>
<feature type="active site" description="Cysteine persulfide intermediate" evidence="1">
    <location>
        <position position="21"/>
    </location>
</feature>
<proteinExistence type="inferred from homology"/>
<reference key="1">
    <citation type="journal article" date="2005" name="J. Bacteriol.">
        <title>Whole-genome sequence analysis of Pseudomonas syringae pv. phaseolicola 1448A reveals divergence among pathovars in genes involved in virulence and transposition.</title>
        <authorList>
            <person name="Joardar V."/>
            <person name="Lindeberg M."/>
            <person name="Jackson R.W."/>
            <person name="Selengut J."/>
            <person name="Dodson R."/>
            <person name="Brinkac L.M."/>
            <person name="Daugherty S.C."/>
            <person name="DeBoy R.T."/>
            <person name="Durkin A.S."/>
            <person name="Gwinn Giglio M."/>
            <person name="Madupu R."/>
            <person name="Nelson W.C."/>
            <person name="Rosovitz M.J."/>
            <person name="Sullivan S.A."/>
            <person name="Crabtree J."/>
            <person name="Creasy T."/>
            <person name="Davidsen T.M."/>
            <person name="Haft D.H."/>
            <person name="Zafar N."/>
            <person name="Zhou L."/>
            <person name="Halpin R."/>
            <person name="Holley T."/>
            <person name="Khouri H.M."/>
            <person name="Feldblyum T.V."/>
            <person name="White O."/>
            <person name="Fraser C.M."/>
            <person name="Chatterjee A.K."/>
            <person name="Cartinhour S."/>
            <person name="Schneider D."/>
            <person name="Mansfield J.W."/>
            <person name="Collmer A."/>
            <person name="Buell R."/>
        </authorList>
    </citation>
    <scope>NUCLEOTIDE SEQUENCE [LARGE SCALE GENOMIC DNA]</scope>
    <source>
        <strain>1448A / Race 6</strain>
    </source>
</reference>
<comment type="function">
    <text evidence="1">Sulfur carrier protein which probably makes part of a sulfur-relay system.</text>
</comment>
<comment type="subcellular location">
    <subcellularLocation>
        <location evidence="1">Cytoplasm</location>
    </subcellularLocation>
</comment>
<comment type="similarity">
    <text evidence="1">Belongs to the sulfur carrier protein TusA family.</text>
</comment>
<keyword id="KW-0963">Cytoplasm</keyword>
<organism>
    <name type="scientific">Pseudomonas savastanoi pv. phaseolicola (strain 1448A / Race 6)</name>
    <name type="common">Pseudomonas syringae pv. phaseolicola (strain 1448A / Race 6)</name>
    <dbReference type="NCBI Taxonomy" id="264730"/>
    <lineage>
        <taxon>Bacteria</taxon>
        <taxon>Pseudomonadati</taxon>
        <taxon>Pseudomonadota</taxon>
        <taxon>Gammaproteobacteria</taxon>
        <taxon>Pseudomonadales</taxon>
        <taxon>Pseudomonadaceae</taxon>
        <taxon>Pseudomonas</taxon>
    </lineage>
</organism>
<accession>Q48KQ4</accession>
<protein>
    <recommendedName>
        <fullName evidence="1">Sulfur carrier protein TusA</fullName>
    </recommendedName>
</protein>
<evidence type="ECO:0000255" key="1">
    <source>
        <dbReference type="HAMAP-Rule" id="MF_00413"/>
    </source>
</evidence>
<gene>
    <name evidence="1" type="primary">tusA</name>
    <name type="ordered locus">PSPPH_1787</name>
</gene>
<sequence length="84" mass="9422">MSEPIENLTVDAVLEAVGLFCPEPVMMLHQKVRDLPAGGLLKVIATDPSTRRDIPKFCVFLGHELVAEQAEEGTFLYWIRKKPD</sequence>
<name>TUSA_PSE14</name>